<reference key="1">
    <citation type="submission" date="2003-10" db="EMBL/GenBank/DDBJ databases">
        <title>The complete genome sequence of the alkaliphilic Bacillus clausii KSM-K16.</title>
        <authorList>
            <person name="Takaki Y."/>
            <person name="Kageyama Y."/>
            <person name="Shimamura S."/>
            <person name="Suzuki H."/>
            <person name="Nishi S."/>
            <person name="Hatada Y."/>
            <person name="Kawai S."/>
            <person name="Ito S."/>
            <person name="Horikoshi K."/>
        </authorList>
    </citation>
    <scope>NUCLEOTIDE SEQUENCE [LARGE SCALE GENOMIC DNA]</scope>
    <source>
        <strain>KSM-K16</strain>
    </source>
</reference>
<sequence length="264" mass="30508">MEQYLQLCEHVLQNGSPKSDRTGTGTISVFGYQMRFDLEKGFPIVTTKKLHMRSIIHELLWFLKGDTNIRYLQENGVRIWNEWADENGDLGPVYGKQWRSWEGANGKTVDQITEVVEQIKTNPNSRRLIVNAWNVAEIEEMALAPCHCLFQFYVNDGKLSCQLYQRSADIFLGVPFNISSYALLTMMMAQVCGLKPGEFIHTFGDAHLYNNHIEQTKLQLTRKPKQLPTMHINPEVTDLFAFTYDDFELKHYDPYPHIKAEVSV</sequence>
<gene>
    <name evidence="1" type="primary">thyA</name>
    <name type="ordered locus">ABC2955</name>
</gene>
<protein>
    <recommendedName>
        <fullName evidence="1">Thymidylate synthase</fullName>
        <shortName evidence="1">TS</shortName>
        <shortName evidence="1">TSase</shortName>
        <ecNumber evidence="1">2.1.1.45</ecNumber>
    </recommendedName>
</protein>
<dbReference type="EC" id="2.1.1.45" evidence="1"/>
<dbReference type="EMBL" id="AP006627">
    <property type="protein sequence ID" value="BAD65489.1"/>
    <property type="molecule type" value="Genomic_DNA"/>
</dbReference>
<dbReference type="RefSeq" id="WP_011247797.1">
    <property type="nucleotide sequence ID" value="NC_006582.1"/>
</dbReference>
<dbReference type="SMR" id="Q5WDS1"/>
<dbReference type="STRING" id="66692.ABC2955"/>
<dbReference type="KEGG" id="bcl:ABC2955"/>
<dbReference type="eggNOG" id="COG0207">
    <property type="taxonomic scope" value="Bacteria"/>
</dbReference>
<dbReference type="HOGENOM" id="CLU_021669_0_0_9"/>
<dbReference type="OrthoDB" id="9774633at2"/>
<dbReference type="UniPathway" id="UPA00575"/>
<dbReference type="Proteomes" id="UP000001168">
    <property type="component" value="Chromosome"/>
</dbReference>
<dbReference type="GO" id="GO:0005829">
    <property type="term" value="C:cytosol"/>
    <property type="evidence" value="ECO:0007669"/>
    <property type="project" value="TreeGrafter"/>
</dbReference>
<dbReference type="GO" id="GO:0004799">
    <property type="term" value="F:thymidylate synthase activity"/>
    <property type="evidence" value="ECO:0007669"/>
    <property type="project" value="UniProtKB-UniRule"/>
</dbReference>
<dbReference type="GO" id="GO:0006231">
    <property type="term" value="P:dTMP biosynthetic process"/>
    <property type="evidence" value="ECO:0007669"/>
    <property type="project" value="UniProtKB-UniRule"/>
</dbReference>
<dbReference type="GO" id="GO:0006235">
    <property type="term" value="P:dTTP biosynthetic process"/>
    <property type="evidence" value="ECO:0007669"/>
    <property type="project" value="UniProtKB-UniRule"/>
</dbReference>
<dbReference type="GO" id="GO:0032259">
    <property type="term" value="P:methylation"/>
    <property type="evidence" value="ECO:0007669"/>
    <property type="project" value="UniProtKB-KW"/>
</dbReference>
<dbReference type="CDD" id="cd00351">
    <property type="entry name" value="TS_Pyrimidine_HMase"/>
    <property type="match status" value="1"/>
</dbReference>
<dbReference type="FunFam" id="3.30.572.10:FF:000001">
    <property type="entry name" value="Thymidylate synthase"/>
    <property type="match status" value="1"/>
</dbReference>
<dbReference type="Gene3D" id="3.30.572.10">
    <property type="entry name" value="Thymidylate synthase/dCMP hydroxymethylase domain"/>
    <property type="match status" value="1"/>
</dbReference>
<dbReference type="HAMAP" id="MF_00008">
    <property type="entry name" value="Thymidy_synth_bact"/>
    <property type="match status" value="1"/>
</dbReference>
<dbReference type="InterPro" id="IPR045097">
    <property type="entry name" value="Thymidate_synth/dCMP_Mease"/>
</dbReference>
<dbReference type="InterPro" id="IPR023451">
    <property type="entry name" value="Thymidate_synth/dCMP_Mease_dom"/>
</dbReference>
<dbReference type="InterPro" id="IPR036926">
    <property type="entry name" value="Thymidate_synth/dCMP_Mease_sf"/>
</dbReference>
<dbReference type="InterPro" id="IPR000398">
    <property type="entry name" value="Thymidylate_synthase"/>
</dbReference>
<dbReference type="InterPro" id="IPR020940">
    <property type="entry name" value="Thymidylate_synthase_AS"/>
</dbReference>
<dbReference type="NCBIfam" id="NF002497">
    <property type="entry name" value="PRK01827.1-3"/>
    <property type="match status" value="1"/>
</dbReference>
<dbReference type="NCBIfam" id="NF002499">
    <property type="entry name" value="PRK01827.1-5"/>
    <property type="match status" value="1"/>
</dbReference>
<dbReference type="NCBIfam" id="TIGR03284">
    <property type="entry name" value="thym_sym"/>
    <property type="match status" value="2"/>
</dbReference>
<dbReference type="PANTHER" id="PTHR11548:SF9">
    <property type="entry name" value="THYMIDYLATE SYNTHASE"/>
    <property type="match status" value="1"/>
</dbReference>
<dbReference type="PANTHER" id="PTHR11548">
    <property type="entry name" value="THYMIDYLATE SYNTHASE 1"/>
    <property type="match status" value="1"/>
</dbReference>
<dbReference type="Pfam" id="PF00303">
    <property type="entry name" value="Thymidylat_synt"/>
    <property type="match status" value="1"/>
</dbReference>
<dbReference type="PRINTS" id="PR00108">
    <property type="entry name" value="THYMDSNTHASE"/>
</dbReference>
<dbReference type="SUPFAM" id="SSF55831">
    <property type="entry name" value="Thymidylate synthase/dCMP hydroxymethylase"/>
    <property type="match status" value="1"/>
</dbReference>
<dbReference type="PROSITE" id="PS00091">
    <property type="entry name" value="THYMIDYLATE_SYNTHASE"/>
    <property type="match status" value="1"/>
</dbReference>
<proteinExistence type="inferred from homology"/>
<feature type="chain" id="PRO_0000140930" description="Thymidylate synthase">
    <location>
        <begin position="1"/>
        <end position="264"/>
    </location>
</feature>
<feature type="active site" description="Nucleophile" evidence="1">
    <location>
        <position position="146"/>
    </location>
</feature>
<feature type="binding site" description="in other chain" evidence="1">
    <location>
        <position position="21"/>
    </location>
    <ligand>
        <name>dUMP</name>
        <dbReference type="ChEBI" id="CHEBI:246422"/>
        <note>ligand shared between dimeric partners</note>
    </ligand>
</feature>
<feature type="binding site" evidence="1">
    <location>
        <position position="51"/>
    </location>
    <ligand>
        <name>(6R)-5,10-methylene-5,6,7,8-tetrahydrofolate</name>
        <dbReference type="ChEBI" id="CHEBI:15636"/>
    </ligand>
</feature>
<feature type="binding site" evidence="1">
    <location>
        <begin position="126"/>
        <end position="127"/>
    </location>
    <ligand>
        <name>dUMP</name>
        <dbReference type="ChEBI" id="CHEBI:246422"/>
        <note>ligand shared between dimeric partners</note>
    </ligand>
</feature>
<feature type="binding site" description="in other chain" evidence="1">
    <location>
        <begin position="166"/>
        <end position="169"/>
    </location>
    <ligand>
        <name>dUMP</name>
        <dbReference type="ChEBI" id="CHEBI:246422"/>
        <note>ligand shared between dimeric partners</note>
    </ligand>
</feature>
<feature type="binding site" evidence="1">
    <location>
        <position position="169"/>
    </location>
    <ligand>
        <name>(6R)-5,10-methylene-5,6,7,8-tetrahydrofolate</name>
        <dbReference type="ChEBI" id="CHEBI:15636"/>
    </ligand>
</feature>
<feature type="binding site" description="in other chain" evidence="1">
    <location>
        <position position="177"/>
    </location>
    <ligand>
        <name>dUMP</name>
        <dbReference type="ChEBI" id="CHEBI:246422"/>
        <note>ligand shared between dimeric partners</note>
    </ligand>
</feature>
<feature type="binding site" description="in other chain" evidence="1">
    <location>
        <begin position="207"/>
        <end position="209"/>
    </location>
    <ligand>
        <name>dUMP</name>
        <dbReference type="ChEBI" id="CHEBI:246422"/>
        <note>ligand shared between dimeric partners</note>
    </ligand>
</feature>
<feature type="binding site" evidence="1">
    <location>
        <position position="263"/>
    </location>
    <ligand>
        <name>(6R)-5,10-methylene-5,6,7,8-tetrahydrofolate</name>
        <dbReference type="ChEBI" id="CHEBI:15636"/>
    </ligand>
</feature>
<accession>Q5WDS1</accession>
<name>TYSY_SHOC1</name>
<comment type="function">
    <text evidence="1">Catalyzes the reductive methylation of 2'-deoxyuridine-5'-monophosphate (dUMP) to 2'-deoxythymidine-5'-monophosphate (dTMP) while utilizing 5,10-methylenetetrahydrofolate (mTHF) as the methyl donor and reductant in the reaction, yielding dihydrofolate (DHF) as a by-product. This enzymatic reaction provides an intracellular de novo source of dTMP, an essential precursor for DNA biosynthesis.</text>
</comment>
<comment type="catalytic activity">
    <reaction evidence="1">
        <text>dUMP + (6R)-5,10-methylene-5,6,7,8-tetrahydrofolate = 7,8-dihydrofolate + dTMP</text>
        <dbReference type="Rhea" id="RHEA:12104"/>
        <dbReference type="ChEBI" id="CHEBI:15636"/>
        <dbReference type="ChEBI" id="CHEBI:57451"/>
        <dbReference type="ChEBI" id="CHEBI:63528"/>
        <dbReference type="ChEBI" id="CHEBI:246422"/>
        <dbReference type="EC" id="2.1.1.45"/>
    </reaction>
</comment>
<comment type="pathway">
    <text evidence="1">Pyrimidine metabolism; dTTP biosynthesis.</text>
</comment>
<comment type="subunit">
    <text evidence="1">Homodimer.</text>
</comment>
<comment type="subcellular location">
    <subcellularLocation>
        <location evidence="1">Cytoplasm</location>
    </subcellularLocation>
</comment>
<comment type="similarity">
    <text evidence="1">Belongs to the thymidylate synthase family. Bacterial-type ThyA subfamily.</text>
</comment>
<organism>
    <name type="scientific">Shouchella clausii (strain KSM-K16)</name>
    <name type="common">Alkalihalobacillus clausii</name>
    <dbReference type="NCBI Taxonomy" id="66692"/>
    <lineage>
        <taxon>Bacteria</taxon>
        <taxon>Bacillati</taxon>
        <taxon>Bacillota</taxon>
        <taxon>Bacilli</taxon>
        <taxon>Bacillales</taxon>
        <taxon>Bacillaceae</taxon>
        <taxon>Shouchella</taxon>
    </lineage>
</organism>
<keyword id="KW-0963">Cytoplasm</keyword>
<keyword id="KW-0489">Methyltransferase</keyword>
<keyword id="KW-0545">Nucleotide biosynthesis</keyword>
<keyword id="KW-1185">Reference proteome</keyword>
<keyword id="KW-0808">Transferase</keyword>
<evidence type="ECO:0000255" key="1">
    <source>
        <dbReference type="HAMAP-Rule" id="MF_00008"/>
    </source>
</evidence>